<evidence type="ECO:0000255" key="1">
    <source>
        <dbReference type="PROSITE-ProRule" id="PRU00837"/>
    </source>
</evidence>
<evidence type="ECO:0000256" key="2">
    <source>
        <dbReference type="SAM" id="MobiDB-lite"/>
    </source>
</evidence>
<comment type="function">
    <text>Histones H1 are necessary for the condensation of nucleosome chains into higher-order structures.</text>
</comment>
<comment type="subcellular location">
    <subcellularLocation>
        <location>Nucleus</location>
    </subcellularLocation>
    <subcellularLocation>
        <location>Chromosome</location>
    </subcellularLocation>
</comment>
<comment type="similarity">
    <text evidence="1">Belongs to the histone H1/H5 family.</text>
</comment>
<organism>
    <name type="scientific">Glyptotendipes barbipes</name>
    <name type="common">Midge</name>
    <name type="synonym">Chironomus barbipes</name>
    <dbReference type="NCBI Taxonomy" id="33399"/>
    <lineage>
        <taxon>Eukaryota</taxon>
        <taxon>Metazoa</taxon>
        <taxon>Ecdysozoa</taxon>
        <taxon>Arthropoda</taxon>
        <taxon>Hexapoda</taxon>
        <taxon>Insecta</taxon>
        <taxon>Pterygota</taxon>
        <taxon>Neoptera</taxon>
        <taxon>Endopterygota</taxon>
        <taxon>Diptera</taxon>
        <taxon>Nematocera</taxon>
        <taxon>Chironomoidea</taxon>
        <taxon>Chironomidae</taxon>
        <taxon>Chironominae</taxon>
        <taxon>Glyptotendipes</taxon>
    </lineage>
</organism>
<sequence length="228" mass="23951">MSDPAPEVASAVPVASPAKAKKEKKPKTDKPKKAKAPRTHPPVSEMVVNAIKTLKERGGSSLQAIKKFLAAQYKVDVDKLAPFIKKYLRGAVTKGELLQTKGKGASGSFKLPAAAKKEKVAKTPKKAAGEKKPQAAAKPKKALEKKKSIAKKPKAATATKVKKPVAKSTKKPAAVKPAAKKAAPKPKAAPKPKAATKPKKEVKPKKVAAKKPAEKKPEAAKKPAAKKA</sequence>
<name>H13_GLYBA</name>
<dbReference type="EMBL" id="L29103">
    <property type="protein sequence ID" value="AAA62322.1"/>
    <property type="molecule type" value="Genomic_DNA"/>
</dbReference>
<dbReference type="SMR" id="P40265"/>
<dbReference type="GO" id="GO:0000786">
    <property type="term" value="C:nucleosome"/>
    <property type="evidence" value="ECO:0007669"/>
    <property type="project" value="InterPro"/>
</dbReference>
<dbReference type="GO" id="GO:0005634">
    <property type="term" value="C:nucleus"/>
    <property type="evidence" value="ECO:0007669"/>
    <property type="project" value="UniProtKB-SubCell"/>
</dbReference>
<dbReference type="GO" id="GO:0003690">
    <property type="term" value="F:double-stranded DNA binding"/>
    <property type="evidence" value="ECO:0007669"/>
    <property type="project" value="TreeGrafter"/>
</dbReference>
<dbReference type="GO" id="GO:0031492">
    <property type="term" value="F:nucleosomal DNA binding"/>
    <property type="evidence" value="ECO:0007669"/>
    <property type="project" value="TreeGrafter"/>
</dbReference>
<dbReference type="GO" id="GO:0030527">
    <property type="term" value="F:structural constituent of chromatin"/>
    <property type="evidence" value="ECO:0007669"/>
    <property type="project" value="InterPro"/>
</dbReference>
<dbReference type="GO" id="GO:0030261">
    <property type="term" value="P:chromosome condensation"/>
    <property type="evidence" value="ECO:0007669"/>
    <property type="project" value="TreeGrafter"/>
</dbReference>
<dbReference type="GO" id="GO:0045910">
    <property type="term" value="P:negative regulation of DNA recombination"/>
    <property type="evidence" value="ECO:0007669"/>
    <property type="project" value="TreeGrafter"/>
</dbReference>
<dbReference type="GO" id="GO:0006334">
    <property type="term" value="P:nucleosome assembly"/>
    <property type="evidence" value="ECO:0007669"/>
    <property type="project" value="InterPro"/>
</dbReference>
<dbReference type="CDD" id="cd00073">
    <property type="entry name" value="H15"/>
    <property type="match status" value="1"/>
</dbReference>
<dbReference type="FunFam" id="1.10.10.10:FF:000140">
    <property type="entry name" value="Histone H1.0"/>
    <property type="match status" value="1"/>
</dbReference>
<dbReference type="Gene3D" id="1.10.10.10">
    <property type="entry name" value="Winged helix-like DNA-binding domain superfamily/Winged helix DNA-binding domain"/>
    <property type="match status" value="1"/>
</dbReference>
<dbReference type="InterPro" id="IPR005819">
    <property type="entry name" value="H1/H5"/>
</dbReference>
<dbReference type="InterPro" id="IPR005818">
    <property type="entry name" value="Histone_H1/H5_H15"/>
</dbReference>
<dbReference type="InterPro" id="IPR036388">
    <property type="entry name" value="WH-like_DNA-bd_sf"/>
</dbReference>
<dbReference type="InterPro" id="IPR036390">
    <property type="entry name" value="WH_DNA-bd_sf"/>
</dbReference>
<dbReference type="PANTHER" id="PTHR11467:SF20">
    <property type="entry name" value="H15 DOMAIN-CONTAINING PROTEIN-RELATED"/>
    <property type="match status" value="1"/>
</dbReference>
<dbReference type="PANTHER" id="PTHR11467">
    <property type="entry name" value="HISTONE H1"/>
    <property type="match status" value="1"/>
</dbReference>
<dbReference type="Pfam" id="PF00538">
    <property type="entry name" value="Linker_histone"/>
    <property type="match status" value="1"/>
</dbReference>
<dbReference type="PRINTS" id="PR00624">
    <property type="entry name" value="HISTONEH5"/>
</dbReference>
<dbReference type="SMART" id="SM00526">
    <property type="entry name" value="H15"/>
    <property type="match status" value="1"/>
</dbReference>
<dbReference type="SUPFAM" id="SSF46785">
    <property type="entry name" value="Winged helix' DNA-binding domain"/>
    <property type="match status" value="1"/>
</dbReference>
<dbReference type="PROSITE" id="PS51504">
    <property type="entry name" value="H15"/>
    <property type="match status" value="1"/>
</dbReference>
<protein>
    <recommendedName>
        <fullName>Histone H1-III</fullName>
    </recommendedName>
</protein>
<proteinExistence type="inferred from homology"/>
<accession>P40265</accession>
<reference key="1">
    <citation type="journal article" date="1994" name="J. Cell Biol.">
        <title>Structurally divergent histone H1 variants in chromosomes containing highly condensed interphase chromatin.</title>
        <authorList>
            <person name="Schulze E."/>
            <person name="Nagel S."/>
            <person name="Gavenis K."/>
            <person name="Grossbach U."/>
        </authorList>
    </citation>
    <scope>NUCLEOTIDE SEQUENCE [GENOMIC DNA]</scope>
</reference>
<keyword id="KW-0158">Chromosome</keyword>
<keyword id="KW-0238">DNA-binding</keyword>
<keyword id="KW-0539">Nucleus</keyword>
<feature type="chain" id="PRO_0000195975" description="Histone H1-III">
    <location>
        <begin position="1"/>
        <end position="228"/>
    </location>
</feature>
<feature type="domain" description="H15" evidence="1">
    <location>
        <begin position="39"/>
        <end position="113"/>
    </location>
</feature>
<feature type="region of interest" description="Disordered" evidence="2">
    <location>
        <begin position="1"/>
        <end position="44"/>
    </location>
</feature>
<feature type="region of interest" description="Disordered" evidence="2">
    <location>
        <begin position="98"/>
        <end position="228"/>
    </location>
</feature>
<feature type="compositionally biased region" description="Low complexity" evidence="2">
    <location>
        <begin position="1"/>
        <end position="18"/>
    </location>
</feature>
<feature type="compositionally biased region" description="Basic and acidic residues" evidence="2">
    <location>
        <begin position="115"/>
        <end position="133"/>
    </location>
</feature>
<feature type="compositionally biased region" description="Basic residues" evidence="2">
    <location>
        <begin position="148"/>
        <end position="170"/>
    </location>
</feature>
<feature type="compositionally biased region" description="Basic residues" evidence="2">
    <location>
        <begin position="178"/>
        <end position="209"/>
    </location>
</feature>
<feature type="compositionally biased region" description="Basic and acidic residues" evidence="2">
    <location>
        <begin position="211"/>
        <end position="221"/>
    </location>
</feature>